<name>RS17_ECOSE</name>
<proteinExistence type="inferred from homology"/>
<evidence type="ECO:0000255" key="1">
    <source>
        <dbReference type="HAMAP-Rule" id="MF_01345"/>
    </source>
</evidence>
<evidence type="ECO:0000305" key="2"/>
<feature type="chain" id="PRO_1000143255" description="Small ribosomal subunit protein uS17">
    <location>
        <begin position="1"/>
        <end position="84"/>
    </location>
</feature>
<dbReference type="EMBL" id="AP009240">
    <property type="protein sequence ID" value="BAG79110.1"/>
    <property type="molecule type" value="Genomic_DNA"/>
</dbReference>
<dbReference type="RefSeq" id="WP_000130100.1">
    <property type="nucleotide sequence ID" value="NC_011415.1"/>
</dbReference>
<dbReference type="SMR" id="B6I225"/>
<dbReference type="GeneID" id="93778676"/>
<dbReference type="KEGG" id="ecy:ECSE_3586"/>
<dbReference type="HOGENOM" id="CLU_073626_1_1_6"/>
<dbReference type="Proteomes" id="UP000008199">
    <property type="component" value="Chromosome"/>
</dbReference>
<dbReference type="GO" id="GO:0022627">
    <property type="term" value="C:cytosolic small ribosomal subunit"/>
    <property type="evidence" value="ECO:0007669"/>
    <property type="project" value="TreeGrafter"/>
</dbReference>
<dbReference type="GO" id="GO:0019843">
    <property type="term" value="F:rRNA binding"/>
    <property type="evidence" value="ECO:0007669"/>
    <property type="project" value="UniProtKB-UniRule"/>
</dbReference>
<dbReference type="GO" id="GO:0003735">
    <property type="term" value="F:structural constituent of ribosome"/>
    <property type="evidence" value="ECO:0007669"/>
    <property type="project" value="InterPro"/>
</dbReference>
<dbReference type="GO" id="GO:0006412">
    <property type="term" value="P:translation"/>
    <property type="evidence" value="ECO:0007669"/>
    <property type="project" value="UniProtKB-UniRule"/>
</dbReference>
<dbReference type="CDD" id="cd00364">
    <property type="entry name" value="Ribosomal_uS17"/>
    <property type="match status" value="1"/>
</dbReference>
<dbReference type="FunFam" id="2.40.50.140:FF:000014">
    <property type="entry name" value="30S ribosomal protein S17"/>
    <property type="match status" value="1"/>
</dbReference>
<dbReference type="Gene3D" id="2.40.50.140">
    <property type="entry name" value="Nucleic acid-binding proteins"/>
    <property type="match status" value="1"/>
</dbReference>
<dbReference type="HAMAP" id="MF_01345_B">
    <property type="entry name" value="Ribosomal_uS17_B"/>
    <property type="match status" value="1"/>
</dbReference>
<dbReference type="InterPro" id="IPR012340">
    <property type="entry name" value="NA-bd_OB-fold"/>
</dbReference>
<dbReference type="InterPro" id="IPR000266">
    <property type="entry name" value="Ribosomal_uS17"/>
</dbReference>
<dbReference type="InterPro" id="IPR019984">
    <property type="entry name" value="Ribosomal_uS17_bact/chlr"/>
</dbReference>
<dbReference type="InterPro" id="IPR019979">
    <property type="entry name" value="Ribosomal_uS17_CS"/>
</dbReference>
<dbReference type="NCBIfam" id="NF004123">
    <property type="entry name" value="PRK05610.1"/>
    <property type="match status" value="1"/>
</dbReference>
<dbReference type="NCBIfam" id="TIGR03635">
    <property type="entry name" value="uS17_bact"/>
    <property type="match status" value="1"/>
</dbReference>
<dbReference type="PANTHER" id="PTHR10744">
    <property type="entry name" value="40S RIBOSOMAL PROTEIN S11 FAMILY MEMBER"/>
    <property type="match status" value="1"/>
</dbReference>
<dbReference type="PANTHER" id="PTHR10744:SF1">
    <property type="entry name" value="SMALL RIBOSOMAL SUBUNIT PROTEIN US17M"/>
    <property type="match status" value="1"/>
</dbReference>
<dbReference type="Pfam" id="PF00366">
    <property type="entry name" value="Ribosomal_S17"/>
    <property type="match status" value="1"/>
</dbReference>
<dbReference type="PRINTS" id="PR00973">
    <property type="entry name" value="RIBOSOMALS17"/>
</dbReference>
<dbReference type="SUPFAM" id="SSF50249">
    <property type="entry name" value="Nucleic acid-binding proteins"/>
    <property type="match status" value="1"/>
</dbReference>
<dbReference type="PROSITE" id="PS00056">
    <property type="entry name" value="RIBOSOMAL_S17"/>
    <property type="match status" value="1"/>
</dbReference>
<keyword id="KW-0687">Ribonucleoprotein</keyword>
<keyword id="KW-0689">Ribosomal protein</keyword>
<keyword id="KW-0694">RNA-binding</keyword>
<keyword id="KW-0699">rRNA-binding</keyword>
<gene>
    <name evidence="1" type="primary">rpsQ</name>
    <name type="ordered locus">ECSE_3586</name>
</gene>
<accession>B6I225</accession>
<reference key="1">
    <citation type="journal article" date="2008" name="DNA Res.">
        <title>Complete genome sequence and comparative analysis of the wild-type commensal Escherichia coli strain SE11 isolated from a healthy adult.</title>
        <authorList>
            <person name="Oshima K."/>
            <person name="Toh H."/>
            <person name="Ogura Y."/>
            <person name="Sasamoto H."/>
            <person name="Morita H."/>
            <person name="Park S.-H."/>
            <person name="Ooka T."/>
            <person name="Iyoda S."/>
            <person name="Taylor T.D."/>
            <person name="Hayashi T."/>
            <person name="Itoh K."/>
            <person name="Hattori M."/>
        </authorList>
    </citation>
    <scope>NUCLEOTIDE SEQUENCE [LARGE SCALE GENOMIC DNA]</scope>
    <source>
        <strain>SE11</strain>
    </source>
</reference>
<comment type="function">
    <text evidence="1">One of the primary rRNA binding proteins, it binds specifically to the 5'-end of 16S ribosomal RNA.</text>
</comment>
<comment type="subunit">
    <text evidence="1">Part of the 30S ribosomal subunit.</text>
</comment>
<comment type="similarity">
    <text evidence="1">Belongs to the universal ribosomal protein uS17 family.</text>
</comment>
<sequence>MTDKIRTLQGRVVSDKMEKSIVVAIERFVKHPIYGKFIKRTTKLHVHDENNECGIGDVVEIRECRPLSKTKSWTLVRVVEKAVL</sequence>
<protein>
    <recommendedName>
        <fullName evidence="1">Small ribosomal subunit protein uS17</fullName>
    </recommendedName>
    <alternativeName>
        <fullName evidence="2">30S ribosomal protein S17</fullName>
    </alternativeName>
</protein>
<organism>
    <name type="scientific">Escherichia coli (strain SE11)</name>
    <dbReference type="NCBI Taxonomy" id="409438"/>
    <lineage>
        <taxon>Bacteria</taxon>
        <taxon>Pseudomonadati</taxon>
        <taxon>Pseudomonadota</taxon>
        <taxon>Gammaproteobacteria</taxon>
        <taxon>Enterobacterales</taxon>
        <taxon>Enterobacteriaceae</taxon>
        <taxon>Escherichia</taxon>
    </lineage>
</organism>